<sequence length="143" mass="15778">MAVERTLSIIKPDAVAKNVIGEIYTRFEKAGLKIVAARMMHLSREQAEGFYAVHKERPFFKDLVDFMISGPVIVQALEGENAVALHRDIMGATNPKDAAPGTIRADFAESIDENAVHGSDSLENAGKEIAFFFKPEEICARTR</sequence>
<keyword id="KW-0067">ATP-binding</keyword>
<keyword id="KW-0963">Cytoplasm</keyword>
<keyword id="KW-0418">Kinase</keyword>
<keyword id="KW-0460">Magnesium</keyword>
<keyword id="KW-0479">Metal-binding</keyword>
<keyword id="KW-0546">Nucleotide metabolism</keyword>
<keyword id="KW-0547">Nucleotide-binding</keyword>
<keyword id="KW-0597">Phosphoprotein</keyword>
<keyword id="KW-1185">Reference proteome</keyword>
<keyword id="KW-0808">Transferase</keyword>
<feature type="chain" id="PRO_1000192299" description="Nucleoside diphosphate kinase">
    <location>
        <begin position="1"/>
        <end position="143"/>
    </location>
</feature>
<feature type="active site" description="Pros-phosphohistidine intermediate" evidence="1">
    <location>
        <position position="117"/>
    </location>
</feature>
<feature type="binding site" evidence="1">
    <location>
        <position position="11"/>
    </location>
    <ligand>
        <name>ATP</name>
        <dbReference type="ChEBI" id="CHEBI:30616"/>
    </ligand>
</feature>
<feature type="binding site" evidence="1">
    <location>
        <position position="59"/>
    </location>
    <ligand>
        <name>ATP</name>
        <dbReference type="ChEBI" id="CHEBI:30616"/>
    </ligand>
</feature>
<feature type="binding site" evidence="1">
    <location>
        <position position="87"/>
    </location>
    <ligand>
        <name>ATP</name>
        <dbReference type="ChEBI" id="CHEBI:30616"/>
    </ligand>
</feature>
<feature type="binding site" evidence="1">
    <location>
        <position position="93"/>
    </location>
    <ligand>
        <name>ATP</name>
        <dbReference type="ChEBI" id="CHEBI:30616"/>
    </ligand>
</feature>
<feature type="binding site" evidence="1">
    <location>
        <position position="104"/>
    </location>
    <ligand>
        <name>ATP</name>
        <dbReference type="ChEBI" id="CHEBI:30616"/>
    </ligand>
</feature>
<feature type="binding site" evidence="1">
    <location>
        <position position="114"/>
    </location>
    <ligand>
        <name>ATP</name>
        <dbReference type="ChEBI" id="CHEBI:30616"/>
    </ligand>
</feature>
<reference key="1">
    <citation type="journal article" date="2011" name="Stand. Genomic Sci.">
        <title>Complete genome sequence of 'Thioalkalivibrio sulfidophilus' HL-EbGr7.</title>
        <authorList>
            <person name="Muyzer G."/>
            <person name="Sorokin D.Y."/>
            <person name="Mavromatis K."/>
            <person name="Lapidus A."/>
            <person name="Clum A."/>
            <person name="Ivanova N."/>
            <person name="Pati A."/>
            <person name="d'Haeseleer P."/>
            <person name="Woyke T."/>
            <person name="Kyrpides N.C."/>
        </authorList>
    </citation>
    <scope>NUCLEOTIDE SEQUENCE [LARGE SCALE GENOMIC DNA]</scope>
    <source>
        <strain>HL-EbGR7</strain>
    </source>
</reference>
<evidence type="ECO:0000255" key="1">
    <source>
        <dbReference type="HAMAP-Rule" id="MF_00451"/>
    </source>
</evidence>
<dbReference type="EC" id="2.7.4.6" evidence="1"/>
<dbReference type="EMBL" id="CP001339">
    <property type="protein sequence ID" value="ACL73132.1"/>
    <property type="molecule type" value="Genomic_DNA"/>
</dbReference>
<dbReference type="RefSeq" id="WP_012638611.1">
    <property type="nucleotide sequence ID" value="NC_011901.1"/>
</dbReference>
<dbReference type="SMR" id="B8GTN8"/>
<dbReference type="STRING" id="396588.Tgr7_2052"/>
<dbReference type="KEGG" id="tgr:Tgr7_2052"/>
<dbReference type="eggNOG" id="COG0105">
    <property type="taxonomic scope" value="Bacteria"/>
</dbReference>
<dbReference type="HOGENOM" id="CLU_060216_8_1_6"/>
<dbReference type="OrthoDB" id="9801161at2"/>
<dbReference type="Proteomes" id="UP000002383">
    <property type="component" value="Chromosome"/>
</dbReference>
<dbReference type="GO" id="GO:0005737">
    <property type="term" value="C:cytoplasm"/>
    <property type="evidence" value="ECO:0007669"/>
    <property type="project" value="UniProtKB-SubCell"/>
</dbReference>
<dbReference type="GO" id="GO:0005524">
    <property type="term" value="F:ATP binding"/>
    <property type="evidence" value="ECO:0007669"/>
    <property type="project" value="UniProtKB-UniRule"/>
</dbReference>
<dbReference type="GO" id="GO:0046872">
    <property type="term" value="F:metal ion binding"/>
    <property type="evidence" value="ECO:0007669"/>
    <property type="project" value="UniProtKB-KW"/>
</dbReference>
<dbReference type="GO" id="GO:0004550">
    <property type="term" value="F:nucleoside diphosphate kinase activity"/>
    <property type="evidence" value="ECO:0007669"/>
    <property type="project" value="UniProtKB-UniRule"/>
</dbReference>
<dbReference type="GO" id="GO:0006241">
    <property type="term" value="P:CTP biosynthetic process"/>
    <property type="evidence" value="ECO:0007669"/>
    <property type="project" value="UniProtKB-UniRule"/>
</dbReference>
<dbReference type="GO" id="GO:0006183">
    <property type="term" value="P:GTP biosynthetic process"/>
    <property type="evidence" value="ECO:0007669"/>
    <property type="project" value="UniProtKB-UniRule"/>
</dbReference>
<dbReference type="GO" id="GO:0006228">
    <property type="term" value="P:UTP biosynthetic process"/>
    <property type="evidence" value="ECO:0007669"/>
    <property type="project" value="UniProtKB-UniRule"/>
</dbReference>
<dbReference type="CDD" id="cd04413">
    <property type="entry name" value="NDPk_I"/>
    <property type="match status" value="1"/>
</dbReference>
<dbReference type="FunFam" id="3.30.70.141:FF:000001">
    <property type="entry name" value="Nucleoside diphosphate kinase"/>
    <property type="match status" value="1"/>
</dbReference>
<dbReference type="Gene3D" id="3.30.70.141">
    <property type="entry name" value="Nucleoside diphosphate kinase-like domain"/>
    <property type="match status" value="1"/>
</dbReference>
<dbReference type="HAMAP" id="MF_00451">
    <property type="entry name" value="NDP_kinase"/>
    <property type="match status" value="1"/>
</dbReference>
<dbReference type="InterPro" id="IPR034907">
    <property type="entry name" value="NDK-like_dom"/>
</dbReference>
<dbReference type="InterPro" id="IPR036850">
    <property type="entry name" value="NDK-like_dom_sf"/>
</dbReference>
<dbReference type="InterPro" id="IPR001564">
    <property type="entry name" value="Nucleoside_diP_kinase"/>
</dbReference>
<dbReference type="InterPro" id="IPR023005">
    <property type="entry name" value="Nucleoside_diP_kinase_AS"/>
</dbReference>
<dbReference type="NCBIfam" id="NF001908">
    <property type="entry name" value="PRK00668.1"/>
    <property type="match status" value="1"/>
</dbReference>
<dbReference type="PANTHER" id="PTHR11349">
    <property type="entry name" value="NUCLEOSIDE DIPHOSPHATE KINASE"/>
    <property type="match status" value="1"/>
</dbReference>
<dbReference type="Pfam" id="PF00334">
    <property type="entry name" value="NDK"/>
    <property type="match status" value="1"/>
</dbReference>
<dbReference type="PRINTS" id="PR01243">
    <property type="entry name" value="NUCDPKINASE"/>
</dbReference>
<dbReference type="SMART" id="SM00562">
    <property type="entry name" value="NDK"/>
    <property type="match status" value="1"/>
</dbReference>
<dbReference type="SUPFAM" id="SSF54919">
    <property type="entry name" value="Nucleoside diphosphate kinase, NDK"/>
    <property type="match status" value="1"/>
</dbReference>
<dbReference type="PROSITE" id="PS00469">
    <property type="entry name" value="NDPK"/>
    <property type="match status" value="1"/>
</dbReference>
<dbReference type="PROSITE" id="PS51374">
    <property type="entry name" value="NDPK_LIKE"/>
    <property type="match status" value="1"/>
</dbReference>
<proteinExistence type="inferred from homology"/>
<name>NDK_THISH</name>
<protein>
    <recommendedName>
        <fullName evidence="1">Nucleoside diphosphate kinase</fullName>
        <shortName evidence="1">NDK</shortName>
        <shortName evidence="1">NDP kinase</shortName>
        <ecNumber evidence="1">2.7.4.6</ecNumber>
    </recommendedName>
    <alternativeName>
        <fullName evidence="1">Nucleoside-2-P kinase</fullName>
    </alternativeName>
</protein>
<accession>B8GTN8</accession>
<comment type="function">
    <text evidence="1">Major role in the synthesis of nucleoside triphosphates other than ATP. The ATP gamma phosphate is transferred to the NDP beta phosphate via a ping-pong mechanism, using a phosphorylated active-site intermediate.</text>
</comment>
<comment type="catalytic activity">
    <reaction evidence="1">
        <text>a 2'-deoxyribonucleoside 5'-diphosphate + ATP = a 2'-deoxyribonucleoside 5'-triphosphate + ADP</text>
        <dbReference type="Rhea" id="RHEA:44640"/>
        <dbReference type="ChEBI" id="CHEBI:30616"/>
        <dbReference type="ChEBI" id="CHEBI:61560"/>
        <dbReference type="ChEBI" id="CHEBI:73316"/>
        <dbReference type="ChEBI" id="CHEBI:456216"/>
        <dbReference type="EC" id="2.7.4.6"/>
    </reaction>
</comment>
<comment type="catalytic activity">
    <reaction evidence="1">
        <text>a ribonucleoside 5'-diphosphate + ATP = a ribonucleoside 5'-triphosphate + ADP</text>
        <dbReference type="Rhea" id="RHEA:18113"/>
        <dbReference type="ChEBI" id="CHEBI:30616"/>
        <dbReference type="ChEBI" id="CHEBI:57930"/>
        <dbReference type="ChEBI" id="CHEBI:61557"/>
        <dbReference type="ChEBI" id="CHEBI:456216"/>
        <dbReference type="EC" id="2.7.4.6"/>
    </reaction>
</comment>
<comment type="cofactor">
    <cofactor evidence="1">
        <name>Mg(2+)</name>
        <dbReference type="ChEBI" id="CHEBI:18420"/>
    </cofactor>
</comment>
<comment type="subunit">
    <text evidence="1">Homotetramer.</text>
</comment>
<comment type="subcellular location">
    <subcellularLocation>
        <location evidence="1">Cytoplasm</location>
    </subcellularLocation>
</comment>
<comment type="similarity">
    <text evidence="1">Belongs to the NDK family.</text>
</comment>
<organism>
    <name type="scientific">Thioalkalivibrio sulfidiphilus (strain HL-EbGR7)</name>
    <dbReference type="NCBI Taxonomy" id="396588"/>
    <lineage>
        <taxon>Bacteria</taxon>
        <taxon>Pseudomonadati</taxon>
        <taxon>Pseudomonadota</taxon>
        <taxon>Gammaproteobacteria</taxon>
        <taxon>Chromatiales</taxon>
        <taxon>Ectothiorhodospiraceae</taxon>
        <taxon>Thioalkalivibrio</taxon>
    </lineage>
</organism>
<gene>
    <name evidence="1" type="primary">ndk</name>
    <name type="ordered locus">Tgr7_2052</name>
</gene>